<gene>
    <name type="primary">PGBD1</name>
    <name type="ORF">hucep-4</name>
</gene>
<sequence length="809" mass="92515">MYEALPGPAPENEDGLVKVKEEDPTWEQVCNSQEGSSHTQEICRLRFRHFCYQEAHGPQEALAQLRELCHQWLRPEMHTKEQIMELLVLEQFLTILPKELQPCVKTYPLESGEEAVTVLENLETGSGDTGQQASVYIQGQDMHPMVAEYQGVSLECQSLQLLPGITTLKCEPPQRPQGNPQEVSGPVPHGSAHLQEKNPRDKAVVPVFNPVRSQTLVKTEEETAQAVAAEKWSHLSLTRRNLCGNSAQETVMSLSPMTEEIVTKDRLFKAKQETSEEMEQSGEASGKPNRECAPQIPCSTPIATERTVAHLNTLKDRHPGDLWARMHISSLEYAAGDITRKGRKKDKARVSELLQGLSFSGDSDVEKDNEPEIQPAQKKLKVSCFPEKSWTKRDIKPNFPSWSALDSGLLNLKSEKLNPVELFELFFDDETFNLIVNETNNYASQKNVSLEVTVQEMRCVFGVLLLSGFMRHPRREMYWEVSDTDQNLVRDAIRRDRFELIFSNLHFADNGHLDQKDKFTKLRPLIKQMNKNFLLYAPLEEYYCFDKSMCECFDSDQFLNGKPIRIGYKIWCGTTTQGYLVWFEPYQEESTMKVDEDPDLGLGGNLVMNFADVLLERGQYPYHLCFDSFFTSVKLLSALKKKGVRATGTIRENRTEKCPLMNVEHMKKMKRGYFDFRIEENNEIILCRWYGDGIISLCSNAVGIEPVNEVSCCDADNEEIPQISQPSIVKVYDECKEGVAKMDQIISKYRVRIRSKKWYSILVSYMIDVAMNNAWQLHRACNPGASLDPLDFRRFVAHFYLEHNAHLSD</sequence>
<dbReference type="EMBL" id="D88259">
    <property type="protein sequence ID" value="BAB46919.1"/>
    <property type="molecule type" value="mRNA"/>
</dbReference>
<dbReference type="EMBL" id="AK223446">
    <property type="protein sequence ID" value="BAD97166.1"/>
    <property type="molecule type" value="mRNA"/>
</dbReference>
<dbReference type="EMBL" id="AL021997">
    <property type="status" value="NOT_ANNOTATED_CDS"/>
    <property type="molecule type" value="Genomic_DNA"/>
</dbReference>
<dbReference type="EMBL" id="BC069033">
    <property type="protein sequence ID" value="AAH69033.1"/>
    <property type="status" value="ALT_TERM"/>
    <property type="molecule type" value="mRNA"/>
</dbReference>
<dbReference type="EMBL" id="BC128585">
    <property type="protein sequence ID" value="AAI28586.1"/>
    <property type="molecule type" value="mRNA"/>
</dbReference>
<dbReference type="CCDS" id="CCDS4648.1"/>
<dbReference type="RefSeq" id="NP_001171672.1">
    <property type="nucleotide sequence ID" value="NM_001184743.2"/>
</dbReference>
<dbReference type="RefSeq" id="NP_001372988.1">
    <property type="nucleotide sequence ID" value="NM_001386059.1"/>
</dbReference>
<dbReference type="RefSeq" id="NP_115896.1">
    <property type="nucleotide sequence ID" value="NM_032507.4"/>
</dbReference>
<dbReference type="RefSeq" id="XP_016866850.1">
    <property type="nucleotide sequence ID" value="XM_017011361.1"/>
</dbReference>
<dbReference type="SMR" id="Q96JS3"/>
<dbReference type="BioGRID" id="124132">
    <property type="interactions" value="30"/>
</dbReference>
<dbReference type="FunCoup" id="Q96JS3">
    <property type="interactions" value="128"/>
</dbReference>
<dbReference type="IntAct" id="Q96JS3">
    <property type="interactions" value="28"/>
</dbReference>
<dbReference type="STRING" id="9606.ENSP00000259883"/>
<dbReference type="GlyGen" id="Q96JS3">
    <property type="glycosylation" value="1 site, 1 O-linked glycan (1 site)"/>
</dbReference>
<dbReference type="iPTMnet" id="Q96JS3"/>
<dbReference type="PhosphoSitePlus" id="Q96JS3"/>
<dbReference type="BioMuta" id="PGBD1"/>
<dbReference type="DMDM" id="74751967"/>
<dbReference type="jPOST" id="Q96JS3"/>
<dbReference type="MassIVE" id="Q96JS3"/>
<dbReference type="PaxDb" id="9606-ENSP00000259883"/>
<dbReference type="PeptideAtlas" id="Q96JS3"/>
<dbReference type="ProteomicsDB" id="77007"/>
<dbReference type="ABCD" id="Q96JS3">
    <property type="antibodies" value="2 sequenced antibodies"/>
</dbReference>
<dbReference type="Antibodypedia" id="1792">
    <property type="antibodies" value="255 antibodies from 32 providers"/>
</dbReference>
<dbReference type="DNASU" id="84547"/>
<dbReference type="Ensembl" id="ENST00000259883.3">
    <property type="protein sequence ID" value="ENSP00000259883.3"/>
    <property type="gene ID" value="ENSG00000137338.6"/>
</dbReference>
<dbReference type="Ensembl" id="ENST00000682144.1">
    <property type="protein sequence ID" value="ENSP00000506997.1"/>
    <property type="gene ID" value="ENSG00000137338.6"/>
</dbReference>
<dbReference type="GeneID" id="84547"/>
<dbReference type="KEGG" id="hsa:84547"/>
<dbReference type="MANE-Select" id="ENST00000682144.1">
    <property type="protein sequence ID" value="ENSP00000506997.1"/>
    <property type="RefSeq nucleotide sequence ID" value="NM_032507.4"/>
    <property type="RefSeq protein sequence ID" value="NP_115896.1"/>
</dbReference>
<dbReference type="UCSC" id="uc003nkz.4">
    <property type="organism name" value="human"/>
</dbReference>
<dbReference type="AGR" id="HGNC:19398"/>
<dbReference type="CTD" id="84547"/>
<dbReference type="DisGeNET" id="84547"/>
<dbReference type="GeneCards" id="PGBD1"/>
<dbReference type="HGNC" id="HGNC:19398">
    <property type="gene designation" value="PGBD1"/>
</dbReference>
<dbReference type="HPA" id="ENSG00000137338">
    <property type="expression patterns" value="Low tissue specificity"/>
</dbReference>
<dbReference type="neXtProt" id="NX_Q96JS3"/>
<dbReference type="OpenTargets" id="ENSG00000137338"/>
<dbReference type="PharmGKB" id="PA134919893"/>
<dbReference type="VEuPathDB" id="HostDB:ENSG00000137338"/>
<dbReference type="eggNOG" id="KOG1721">
    <property type="taxonomic scope" value="Eukaryota"/>
</dbReference>
<dbReference type="GeneTree" id="ENSGT00940000163016"/>
<dbReference type="HOGENOM" id="CLU_357756_0_0_1"/>
<dbReference type="InParanoid" id="Q96JS3"/>
<dbReference type="OMA" id="KMKKGYF"/>
<dbReference type="OrthoDB" id="5985989at2759"/>
<dbReference type="PAN-GO" id="Q96JS3">
    <property type="GO annotations" value="3 GO annotations based on evolutionary models"/>
</dbReference>
<dbReference type="PhylomeDB" id="Q96JS3"/>
<dbReference type="TreeFam" id="TF328011"/>
<dbReference type="PathwayCommons" id="Q96JS3"/>
<dbReference type="SignaLink" id="Q96JS3"/>
<dbReference type="BioGRID-ORCS" id="84547">
    <property type="hits" value="8 hits in 1159 CRISPR screens"/>
</dbReference>
<dbReference type="GenomeRNAi" id="84547"/>
<dbReference type="Pharos" id="Q96JS3">
    <property type="development level" value="Tbio"/>
</dbReference>
<dbReference type="PRO" id="PR:Q96JS3"/>
<dbReference type="Proteomes" id="UP000005640">
    <property type="component" value="Chromosome 6"/>
</dbReference>
<dbReference type="RNAct" id="Q96JS3">
    <property type="molecule type" value="protein"/>
</dbReference>
<dbReference type="Bgee" id="ENSG00000137338">
    <property type="expression patterns" value="Expressed in primordial germ cell in gonad and 113 other cell types or tissues"/>
</dbReference>
<dbReference type="GO" id="GO:0016020">
    <property type="term" value="C:membrane"/>
    <property type="evidence" value="ECO:0007669"/>
    <property type="project" value="InterPro"/>
</dbReference>
<dbReference type="GO" id="GO:0003700">
    <property type="term" value="F:DNA-binding transcription factor activity"/>
    <property type="evidence" value="ECO:0000303"/>
    <property type="project" value="ARUK-UCL"/>
</dbReference>
<dbReference type="GO" id="GO:0042802">
    <property type="term" value="F:identical protein binding"/>
    <property type="evidence" value="ECO:0000353"/>
    <property type="project" value="IntAct"/>
</dbReference>
<dbReference type="GO" id="GO:0043565">
    <property type="term" value="F:sequence-specific DNA binding"/>
    <property type="evidence" value="ECO:0000318"/>
    <property type="project" value="GO_Central"/>
</dbReference>
<dbReference type="GO" id="GO:0006357">
    <property type="term" value="P:regulation of transcription by RNA polymerase II"/>
    <property type="evidence" value="ECO:0000303"/>
    <property type="project" value="ARUK-UCL"/>
</dbReference>
<dbReference type="CDD" id="cd07936">
    <property type="entry name" value="SCAN"/>
    <property type="match status" value="1"/>
</dbReference>
<dbReference type="FunFam" id="1.10.4020.10:FF:000001">
    <property type="entry name" value="zinc finger protein 263 isoform X1"/>
    <property type="match status" value="1"/>
</dbReference>
<dbReference type="Gene3D" id="1.10.4020.10">
    <property type="entry name" value="DNA breaking-rejoining enzymes"/>
    <property type="match status" value="1"/>
</dbReference>
<dbReference type="InterPro" id="IPR029526">
    <property type="entry name" value="PGBD"/>
</dbReference>
<dbReference type="InterPro" id="IPR052638">
    <property type="entry name" value="PiggyBac_TE-derived"/>
</dbReference>
<dbReference type="InterPro" id="IPR003309">
    <property type="entry name" value="SCAN_dom"/>
</dbReference>
<dbReference type="InterPro" id="IPR038269">
    <property type="entry name" value="SCAN_sf"/>
</dbReference>
<dbReference type="InterPro" id="IPR001190">
    <property type="entry name" value="SRCR"/>
</dbReference>
<dbReference type="PANTHER" id="PTHR47055">
    <property type="entry name" value="DDE_TNP_1_7 DOMAIN-CONTAINING PROTEIN"/>
    <property type="match status" value="1"/>
</dbReference>
<dbReference type="PANTHER" id="PTHR47055:SF1">
    <property type="entry name" value="PIGGYBAC TRANSPOSABLE ELEMENT-DERIVED PROTEIN 1"/>
    <property type="match status" value="1"/>
</dbReference>
<dbReference type="Pfam" id="PF13843">
    <property type="entry name" value="DDE_Tnp_1_7"/>
    <property type="match status" value="1"/>
</dbReference>
<dbReference type="Pfam" id="PF02023">
    <property type="entry name" value="SCAN"/>
    <property type="match status" value="1"/>
</dbReference>
<dbReference type="SMART" id="SM00431">
    <property type="entry name" value="SCAN"/>
    <property type="match status" value="1"/>
</dbReference>
<dbReference type="SUPFAM" id="SSF47353">
    <property type="entry name" value="Retrovirus capsid dimerization domain-like"/>
    <property type="match status" value="1"/>
</dbReference>
<dbReference type="PROSITE" id="PS50804">
    <property type="entry name" value="SCAN_BOX"/>
    <property type="match status" value="1"/>
</dbReference>
<reference key="1">
    <citation type="submission" date="1996-10" db="EMBL/GenBank/DDBJ databases">
        <title>Biological functions of a novel human gene, hucep-4, which is specifically expressed in the central nervous system.</title>
        <authorList>
            <person name="Yoshimoto M."/>
            <person name="Yazaki M."/>
            <person name="Takayama K."/>
            <person name="Matsumoto K."/>
        </authorList>
    </citation>
    <scope>NUCLEOTIDE SEQUENCE [MRNA]</scope>
    <source>
        <tissue>Brain</tissue>
    </source>
</reference>
<reference key="2">
    <citation type="submission" date="2005-04" db="EMBL/GenBank/DDBJ databases">
        <authorList>
            <person name="Totoki Y."/>
            <person name="Toyoda A."/>
            <person name="Takeda T."/>
            <person name="Sakaki Y."/>
            <person name="Tanaka A."/>
            <person name="Yokoyama S."/>
        </authorList>
    </citation>
    <scope>NUCLEOTIDE SEQUENCE [LARGE SCALE MRNA]</scope>
    <source>
        <tissue>Brain</tissue>
    </source>
</reference>
<reference key="3">
    <citation type="journal article" date="2003" name="Nature">
        <title>The DNA sequence and analysis of human chromosome 6.</title>
        <authorList>
            <person name="Mungall A.J."/>
            <person name="Palmer S.A."/>
            <person name="Sims S.K."/>
            <person name="Edwards C.A."/>
            <person name="Ashurst J.L."/>
            <person name="Wilming L."/>
            <person name="Jones M.C."/>
            <person name="Horton R."/>
            <person name="Hunt S.E."/>
            <person name="Scott C.E."/>
            <person name="Gilbert J.G.R."/>
            <person name="Clamp M.E."/>
            <person name="Bethel G."/>
            <person name="Milne S."/>
            <person name="Ainscough R."/>
            <person name="Almeida J.P."/>
            <person name="Ambrose K.D."/>
            <person name="Andrews T.D."/>
            <person name="Ashwell R.I.S."/>
            <person name="Babbage A.K."/>
            <person name="Bagguley C.L."/>
            <person name="Bailey J."/>
            <person name="Banerjee R."/>
            <person name="Barker D.J."/>
            <person name="Barlow K.F."/>
            <person name="Bates K."/>
            <person name="Beare D.M."/>
            <person name="Beasley H."/>
            <person name="Beasley O."/>
            <person name="Bird C.P."/>
            <person name="Blakey S.E."/>
            <person name="Bray-Allen S."/>
            <person name="Brook J."/>
            <person name="Brown A.J."/>
            <person name="Brown J.Y."/>
            <person name="Burford D.C."/>
            <person name="Burrill W."/>
            <person name="Burton J."/>
            <person name="Carder C."/>
            <person name="Carter N.P."/>
            <person name="Chapman J.C."/>
            <person name="Clark S.Y."/>
            <person name="Clark G."/>
            <person name="Clee C.M."/>
            <person name="Clegg S."/>
            <person name="Cobley V."/>
            <person name="Collier R.E."/>
            <person name="Collins J.E."/>
            <person name="Colman L.K."/>
            <person name="Corby N.R."/>
            <person name="Coville G.J."/>
            <person name="Culley K.M."/>
            <person name="Dhami P."/>
            <person name="Davies J."/>
            <person name="Dunn M."/>
            <person name="Earthrowl M.E."/>
            <person name="Ellington A.E."/>
            <person name="Evans K.A."/>
            <person name="Faulkner L."/>
            <person name="Francis M.D."/>
            <person name="Frankish A."/>
            <person name="Frankland J."/>
            <person name="French L."/>
            <person name="Garner P."/>
            <person name="Garnett J."/>
            <person name="Ghori M.J."/>
            <person name="Gilby L.M."/>
            <person name="Gillson C.J."/>
            <person name="Glithero R.J."/>
            <person name="Grafham D.V."/>
            <person name="Grant M."/>
            <person name="Gribble S."/>
            <person name="Griffiths C."/>
            <person name="Griffiths M.N.D."/>
            <person name="Hall R."/>
            <person name="Halls K.S."/>
            <person name="Hammond S."/>
            <person name="Harley J.L."/>
            <person name="Hart E.A."/>
            <person name="Heath P.D."/>
            <person name="Heathcott R."/>
            <person name="Holmes S.J."/>
            <person name="Howden P.J."/>
            <person name="Howe K.L."/>
            <person name="Howell G.R."/>
            <person name="Huckle E."/>
            <person name="Humphray S.J."/>
            <person name="Humphries M.D."/>
            <person name="Hunt A.R."/>
            <person name="Johnson C.M."/>
            <person name="Joy A.A."/>
            <person name="Kay M."/>
            <person name="Keenan S.J."/>
            <person name="Kimberley A.M."/>
            <person name="King A."/>
            <person name="Laird G.K."/>
            <person name="Langford C."/>
            <person name="Lawlor S."/>
            <person name="Leongamornlert D.A."/>
            <person name="Leversha M."/>
            <person name="Lloyd C.R."/>
            <person name="Lloyd D.M."/>
            <person name="Loveland J.E."/>
            <person name="Lovell J."/>
            <person name="Martin S."/>
            <person name="Mashreghi-Mohammadi M."/>
            <person name="Maslen G.L."/>
            <person name="Matthews L."/>
            <person name="McCann O.T."/>
            <person name="McLaren S.J."/>
            <person name="McLay K."/>
            <person name="McMurray A."/>
            <person name="Moore M.J.F."/>
            <person name="Mullikin J.C."/>
            <person name="Niblett D."/>
            <person name="Nickerson T."/>
            <person name="Novik K.L."/>
            <person name="Oliver K."/>
            <person name="Overton-Larty E.K."/>
            <person name="Parker A."/>
            <person name="Patel R."/>
            <person name="Pearce A.V."/>
            <person name="Peck A.I."/>
            <person name="Phillimore B.J.C.T."/>
            <person name="Phillips S."/>
            <person name="Plumb R.W."/>
            <person name="Porter K.M."/>
            <person name="Ramsey Y."/>
            <person name="Ranby S.A."/>
            <person name="Rice C.M."/>
            <person name="Ross M.T."/>
            <person name="Searle S.M."/>
            <person name="Sehra H.K."/>
            <person name="Sheridan E."/>
            <person name="Skuce C.D."/>
            <person name="Smith S."/>
            <person name="Smith M."/>
            <person name="Spraggon L."/>
            <person name="Squares S.L."/>
            <person name="Steward C.A."/>
            <person name="Sycamore N."/>
            <person name="Tamlyn-Hall G."/>
            <person name="Tester J."/>
            <person name="Theaker A.J."/>
            <person name="Thomas D.W."/>
            <person name="Thorpe A."/>
            <person name="Tracey A."/>
            <person name="Tromans A."/>
            <person name="Tubby B."/>
            <person name="Wall M."/>
            <person name="Wallis J.M."/>
            <person name="West A.P."/>
            <person name="White S.S."/>
            <person name="Whitehead S.L."/>
            <person name="Whittaker H."/>
            <person name="Wild A."/>
            <person name="Willey D.J."/>
            <person name="Wilmer T.E."/>
            <person name="Wood J.M."/>
            <person name="Wray P.W."/>
            <person name="Wyatt J.C."/>
            <person name="Young L."/>
            <person name="Younger R.M."/>
            <person name="Bentley D.R."/>
            <person name="Coulson A."/>
            <person name="Durbin R.M."/>
            <person name="Hubbard T."/>
            <person name="Sulston J.E."/>
            <person name="Dunham I."/>
            <person name="Rogers J."/>
            <person name="Beck S."/>
        </authorList>
    </citation>
    <scope>NUCLEOTIDE SEQUENCE [LARGE SCALE GENOMIC DNA]</scope>
</reference>
<reference key="4">
    <citation type="journal article" date="2004" name="Genome Res.">
        <title>The status, quality, and expansion of the NIH full-length cDNA project: the Mammalian Gene Collection (MGC).</title>
        <authorList>
            <consortium name="The MGC Project Team"/>
        </authorList>
    </citation>
    <scope>NUCLEOTIDE SEQUENCE [LARGE SCALE MRNA]</scope>
    <source>
        <tissue>Liver</tissue>
    </source>
</reference>
<reference key="5">
    <citation type="journal article" date="2008" name="Proc. Natl. Acad. Sci. U.S.A.">
        <title>A quantitative atlas of mitotic phosphorylation.</title>
        <authorList>
            <person name="Dephoure N."/>
            <person name="Zhou C."/>
            <person name="Villen J."/>
            <person name="Beausoleil S.A."/>
            <person name="Bakalarski C.E."/>
            <person name="Elledge S.J."/>
            <person name="Gygi S.P."/>
        </authorList>
    </citation>
    <scope>PHOSPHORYLATION [LARGE SCALE ANALYSIS] AT SER-360</scope>
    <scope>IDENTIFICATION BY MASS SPECTROMETRY [LARGE SCALE ANALYSIS]</scope>
    <source>
        <tissue>Cervix carcinoma</tissue>
    </source>
</reference>
<reference key="6">
    <citation type="journal article" date="2017" name="Nat. Struct. Mol. Biol.">
        <title>Site-specific mapping of the human SUMO proteome reveals co-modification with phosphorylation.</title>
        <authorList>
            <person name="Hendriks I.A."/>
            <person name="Lyon D."/>
            <person name="Young C."/>
            <person name="Jensen L.J."/>
            <person name="Vertegaal A.C."/>
            <person name="Nielsen M.L."/>
        </authorList>
    </citation>
    <scope>SUMOYLATION [LARGE SCALE ANALYSIS] AT LYS-218</scope>
    <scope>IDENTIFICATION BY MASS SPECTROMETRY [LARGE SCALE ANALYSIS]</scope>
</reference>
<name>PGBD1_HUMAN</name>
<organism>
    <name type="scientific">Homo sapiens</name>
    <name type="common">Human</name>
    <dbReference type="NCBI Taxonomy" id="9606"/>
    <lineage>
        <taxon>Eukaryota</taxon>
        <taxon>Metazoa</taxon>
        <taxon>Chordata</taxon>
        <taxon>Craniata</taxon>
        <taxon>Vertebrata</taxon>
        <taxon>Euteleostomi</taxon>
        <taxon>Mammalia</taxon>
        <taxon>Eutheria</taxon>
        <taxon>Euarchontoglires</taxon>
        <taxon>Primates</taxon>
        <taxon>Haplorrhini</taxon>
        <taxon>Catarrhini</taxon>
        <taxon>Hominidae</taxon>
        <taxon>Homo</taxon>
    </lineage>
</organism>
<comment type="interaction">
    <interactant intactId="EBI-10290053">
        <id>Q96JS3</id>
    </interactant>
    <interactant intactId="EBI-748397">
        <id>P50222</id>
        <label>MEOX2</label>
    </interactant>
    <organismsDiffer>false</organismsDiffer>
    <experiments>6</experiments>
</comment>
<comment type="interaction">
    <interactant intactId="EBI-10290053">
        <id>Q96JS3</id>
    </interactant>
    <interactant intactId="EBI-721550">
        <id>P22736</id>
        <label>NR4A1</label>
    </interactant>
    <organismsDiffer>false</organismsDiffer>
    <experiments>3</experiments>
</comment>
<comment type="interaction">
    <interactant intactId="EBI-10290053">
        <id>Q96JS3</id>
    </interactant>
    <interactant intactId="EBI-12697871">
        <id>P22736-2</id>
        <label>NR4A1</label>
    </interactant>
    <organismsDiffer>false</organismsDiffer>
    <experiments>3</experiments>
</comment>
<comment type="interaction">
    <interactant intactId="EBI-10290053">
        <id>Q96JS3</id>
    </interactant>
    <interactant intactId="EBI-10290053">
        <id>Q96JS3</id>
        <label>PGBD1</label>
    </interactant>
    <organismsDiffer>false</organismsDiffer>
    <experiments>5</experiments>
</comment>
<comment type="interaction">
    <interactant intactId="EBI-10290053">
        <id>Q96JS3</id>
    </interactant>
    <interactant intactId="EBI-745846">
        <id>P57086</id>
        <label>SCAND1</label>
    </interactant>
    <organismsDiffer>false</organismsDiffer>
    <experiments>13</experiments>
</comment>
<comment type="interaction">
    <interactant intactId="EBI-10290053">
        <id>Q96JS3</id>
    </interactant>
    <interactant intactId="EBI-355744">
        <id>Q12933</id>
        <label>TRAF2</label>
    </interactant>
    <organismsDiffer>false</organismsDiffer>
    <experiments>7</experiments>
</comment>
<comment type="interaction">
    <interactant intactId="EBI-10290053">
        <id>Q96JS3</id>
    </interactant>
    <interactant intactId="EBI-2818641">
        <id>Q969J2</id>
        <label>ZKSCAN4</label>
    </interactant>
    <organismsDiffer>false</organismsDiffer>
    <experiments>5</experiments>
</comment>
<comment type="interaction">
    <interactant intactId="EBI-10290053">
        <id>Q96JS3</id>
    </interactant>
    <interactant intactId="EBI-10698225">
        <id>Q9P0L1-2</id>
        <label>ZKSCAN7</label>
    </interactant>
    <organismsDiffer>false</organismsDiffer>
    <experiments>3</experiments>
</comment>
<comment type="interaction">
    <interactant intactId="EBI-10290053">
        <id>Q96JS3</id>
    </interactant>
    <interactant intactId="EBI-707773">
        <id>P17028</id>
        <label>ZNF24</label>
    </interactant>
    <organismsDiffer>false</organismsDiffer>
    <experiments>9</experiments>
</comment>
<comment type="interaction">
    <interactant intactId="EBI-10290053">
        <id>Q96JS3</id>
    </interactant>
    <interactant intactId="EBI-3925851">
        <id>Q9NWS9</id>
        <label>ZNF446</label>
    </interactant>
    <organismsDiffer>false</organismsDiffer>
    <experiments>6</experiments>
</comment>
<comment type="interaction">
    <interactant intactId="EBI-10290053">
        <id>Q96JS3</id>
    </interactant>
    <interactant intactId="EBI-740232">
        <id>Q9NWS9-2</id>
        <label>ZNF446</label>
    </interactant>
    <organismsDiffer>false</organismsDiffer>
    <experiments>6</experiments>
</comment>
<comment type="interaction">
    <interactant intactId="EBI-10290053">
        <id>Q96JS3</id>
    </interactant>
    <interactant intactId="EBI-743906">
        <id>Q96IT1</id>
        <label>ZNF496</label>
    </interactant>
    <organismsDiffer>false</organismsDiffer>
    <experiments>6</experiments>
</comment>
<comment type="interaction">
    <interactant intactId="EBI-10290053">
        <id>Q96JS3</id>
    </interactant>
    <interactant intactId="EBI-1210440">
        <id>O43309</id>
        <label>ZSCAN12</label>
    </interactant>
    <organismsDiffer>false</organismsDiffer>
    <experiments>3</experiments>
</comment>
<comment type="interaction">
    <interactant intactId="EBI-10290053">
        <id>Q96JS3</id>
    </interactant>
    <interactant intactId="EBI-3919096">
        <id>Q8TBC5</id>
        <label>ZSCAN18</label>
    </interactant>
    <organismsDiffer>false</organismsDiffer>
    <experiments>4</experiments>
</comment>
<comment type="interaction">
    <interactant intactId="EBI-10290053">
        <id>Q96JS3</id>
    </interactant>
    <interactant intactId="EBI-10178224">
        <id>P10073</id>
        <label>ZSCAN22</label>
    </interactant>
    <organismsDiffer>false</organismsDiffer>
    <experiments>9</experiments>
</comment>
<evidence type="ECO:0000255" key="1">
    <source>
        <dbReference type="PROSITE-ProRule" id="PRU00187"/>
    </source>
</evidence>
<evidence type="ECO:0000256" key="2">
    <source>
        <dbReference type="SAM" id="MobiDB-lite"/>
    </source>
</evidence>
<evidence type="ECO:0000305" key="3"/>
<evidence type="ECO:0007744" key="4">
    <source>
    </source>
</evidence>
<evidence type="ECO:0007744" key="5">
    <source>
    </source>
</evidence>
<protein>
    <recommendedName>
        <fullName>PiggyBac transposable element-derived protein 1</fullName>
    </recommendedName>
    <alternativeName>
        <fullName>Cerebral protein 4</fullName>
    </alternativeName>
</protein>
<feature type="chain" id="PRO_0000288052" description="PiggyBac transposable element-derived protein 1">
    <location>
        <begin position="1"/>
        <end position="809"/>
    </location>
</feature>
<feature type="domain" description="SCAN box" evidence="1">
    <location>
        <begin position="44"/>
        <end position="126"/>
    </location>
</feature>
<feature type="region of interest" description="Disordered" evidence="2">
    <location>
        <begin position="170"/>
        <end position="199"/>
    </location>
</feature>
<feature type="region of interest" description="Disordered" evidence="2">
    <location>
        <begin position="271"/>
        <end position="297"/>
    </location>
</feature>
<feature type="modified residue" description="Phosphoserine" evidence="4">
    <location>
        <position position="360"/>
    </location>
</feature>
<feature type="cross-link" description="Glycyl lysine isopeptide (Lys-Gly) (interchain with G-Cter in SUMO2)" evidence="5">
    <location>
        <position position="218"/>
    </location>
</feature>
<feature type="sequence variant" id="VAR_032384" description="In dbSNP:rs3800324.">
    <original>G</original>
    <variation>E</variation>
    <location>
        <position position="244"/>
    </location>
</feature>
<feature type="sequence variant" id="VAR_051273" description="In dbSNP:rs3800324.">
    <original>G</original>
    <variation>R</variation>
    <location>
        <position position="244"/>
    </location>
</feature>
<feature type="sequence variant" id="VAR_032385" description="In dbSNP:rs3800325.">
    <original>Q</original>
    <variation>E</variation>
    <location>
        <position position="248"/>
    </location>
</feature>
<feature type="sequence variant" id="VAR_032386" description="In dbSNP:rs3800326.">
    <original>P</original>
    <variation>L</variation>
    <location>
        <position position="256"/>
    </location>
</feature>
<feature type="sequence variant" id="VAR_032387" description="In dbSNP:rs33932084.">
    <original>N</original>
    <variation>S</variation>
    <location>
        <position position="398"/>
    </location>
</feature>
<feature type="sequence variant" id="VAR_032388" description="In dbSNP:rs16893917.">
    <original>M</original>
    <variation>I</variation>
    <location>
        <position position="592"/>
    </location>
</feature>
<feature type="sequence variant" id="VAR_032389" description="In dbSNP:rs1997660.">
    <original>I</original>
    <variation>V</variation>
    <location>
        <position position="678"/>
    </location>
</feature>
<feature type="sequence variant" id="VAR_032390" description="In dbSNP:rs6456811.">
    <original>H</original>
    <variation>D</variation>
    <location>
        <position position="806"/>
    </location>
</feature>
<feature type="sequence conflict" description="In Ref. 2; BAD97166." evidence="3" ref="2">
    <original>E</original>
    <variation>G</variation>
    <location>
        <position position="99"/>
    </location>
</feature>
<feature type="sequence conflict" description="In Ref. 2; BAD97166." evidence="3" ref="2">
    <original>I</original>
    <variation>V</variation>
    <location>
        <position position="493"/>
    </location>
</feature>
<proteinExistence type="evidence at protein level"/>
<accession>Q96JS3</accession>
<accession>Q53F43</accession>
<accession>Q6NTF5</accession>
<accession>Q8WWS4</accession>
<keyword id="KW-1017">Isopeptide bond</keyword>
<keyword id="KW-0597">Phosphoprotein</keyword>
<keyword id="KW-1267">Proteomics identification</keyword>
<keyword id="KW-1185">Reference proteome</keyword>
<keyword id="KW-0832">Ubl conjugation</keyword>